<sequence length="380" mass="42736">MGRRRQGPAQPASELPARNACLLPNGSAWLPGWAEPDGNGSAGPQDEQLEPAHISPAIPVIITAVYSVVFVVGLVGNSLVMFVIIRYTKMKTATNIYIFNLALADALVTTTMPFQSTVYLMNSWPFGDVLCKIVISIDYYNMFTSIFTLTMMSVDRYIAVCHPVKALDFRTPLKAKIINICIWLLSSSVGISAIILGGTKVREDVDIIECSLQFPDDDYSWWDLFMKICVFVFAFVIPVLIIIVCYTLMILRLKSVRLLSGSREKDRNLRRITRLVLVVVAVFIICWTPIHIFILVEALGSTSHSTAALSSYYFCIALGYTNSSLNPILYAFLDENFKRCFRDFCFPIKMRMERQSTSRVRNTVQDPAYMRNVDGVNKPV</sequence>
<dbReference type="EMBL" id="U04092">
    <property type="protein sequence ID" value="AAA67171.1"/>
    <property type="molecule type" value="mRNA"/>
</dbReference>
<dbReference type="PIR" id="A55259">
    <property type="entry name" value="A55259"/>
</dbReference>
<dbReference type="RefSeq" id="NP_001166461.1">
    <property type="nucleotide sequence ID" value="NM_001172990.1"/>
</dbReference>
<dbReference type="SMR" id="P41144"/>
<dbReference type="FunCoup" id="P41144">
    <property type="interactions" value="518"/>
</dbReference>
<dbReference type="STRING" id="10141.ENSCPOP00000005950"/>
<dbReference type="BindingDB" id="P41144"/>
<dbReference type="ChEMBL" id="CHEMBL3952"/>
<dbReference type="DrugCentral" id="P41144"/>
<dbReference type="GlyCosmos" id="P41144">
    <property type="glycosylation" value="2 sites, No reported glycans"/>
</dbReference>
<dbReference type="GeneID" id="100135587"/>
<dbReference type="KEGG" id="cpoc:100135587"/>
<dbReference type="CTD" id="4986"/>
<dbReference type="eggNOG" id="KOG3656">
    <property type="taxonomic scope" value="Eukaryota"/>
</dbReference>
<dbReference type="InParanoid" id="P41144"/>
<dbReference type="OrthoDB" id="6076970at2759"/>
<dbReference type="PRO" id="PR:P41144"/>
<dbReference type="Proteomes" id="UP000005447">
    <property type="component" value="Unassembled WGS sequence"/>
</dbReference>
<dbReference type="GO" id="GO:0016020">
    <property type="term" value="C:membrane"/>
    <property type="evidence" value="ECO:0000250"/>
    <property type="project" value="UniProtKB"/>
</dbReference>
<dbReference type="GO" id="GO:0043005">
    <property type="term" value="C:neuron projection"/>
    <property type="evidence" value="ECO:0007669"/>
    <property type="project" value="TreeGrafter"/>
</dbReference>
<dbReference type="GO" id="GO:0005886">
    <property type="term" value="C:plasma membrane"/>
    <property type="evidence" value="ECO:0000250"/>
    <property type="project" value="UniProtKB"/>
</dbReference>
<dbReference type="GO" id="GO:0038048">
    <property type="term" value="F:dynorphin receptor activity"/>
    <property type="evidence" value="ECO:0000250"/>
    <property type="project" value="UniProtKB"/>
</dbReference>
<dbReference type="GO" id="GO:0004985">
    <property type="term" value="F:G protein-coupled opioid receptor activity"/>
    <property type="evidence" value="ECO:0000250"/>
    <property type="project" value="UniProtKB"/>
</dbReference>
<dbReference type="GO" id="GO:0042923">
    <property type="term" value="F:neuropeptide binding"/>
    <property type="evidence" value="ECO:0007669"/>
    <property type="project" value="TreeGrafter"/>
</dbReference>
<dbReference type="GO" id="GO:0031635">
    <property type="term" value="P:adenylate cyclase-inhibiting opioid receptor signaling pathway"/>
    <property type="evidence" value="ECO:0000250"/>
    <property type="project" value="UniProtKB"/>
</dbReference>
<dbReference type="GO" id="GO:0007626">
    <property type="term" value="P:locomotory behavior"/>
    <property type="evidence" value="ECO:0000250"/>
    <property type="project" value="UniProtKB"/>
</dbReference>
<dbReference type="GO" id="GO:0007218">
    <property type="term" value="P:neuropeptide signaling pathway"/>
    <property type="evidence" value="ECO:0007669"/>
    <property type="project" value="TreeGrafter"/>
</dbReference>
<dbReference type="GO" id="GO:0007200">
    <property type="term" value="P:phospholipase C-activating G protein-coupled receptor signaling pathway"/>
    <property type="evidence" value="ECO:0000250"/>
    <property type="project" value="UniProtKB"/>
</dbReference>
<dbReference type="GO" id="GO:0046877">
    <property type="term" value="P:regulation of saliva secretion"/>
    <property type="evidence" value="ECO:0000250"/>
    <property type="project" value="UniProtKB"/>
</dbReference>
<dbReference type="GO" id="GO:0019233">
    <property type="term" value="P:sensory perception of pain"/>
    <property type="evidence" value="ECO:0000250"/>
    <property type="project" value="UniProtKB"/>
</dbReference>
<dbReference type="CDD" id="cd15091">
    <property type="entry name" value="7tmA_Kappa_opioid_R"/>
    <property type="match status" value="1"/>
</dbReference>
<dbReference type="FunFam" id="1.20.1070.10:FF:000014">
    <property type="entry name" value="Kappa-type opioid receptor 1"/>
    <property type="match status" value="1"/>
</dbReference>
<dbReference type="Gene3D" id="1.20.1070.10">
    <property type="entry name" value="Rhodopsin 7-helix transmembrane proteins"/>
    <property type="match status" value="1"/>
</dbReference>
<dbReference type="InterPro" id="IPR000276">
    <property type="entry name" value="GPCR_Rhodpsn"/>
</dbReference>
<dbReference type="InterPro" id="IPR017452">
    <property type="entry name" value="GPCR_Rhodpsn_7TM"/>
</dbReference>
<dbReference type="InterPro" id="IPR000452">
    <property type="entry name" value="Kappa_opi_rcpt"/>
</dbReference>
<dbReference type="InterPro" id="IPR001418">
    <property type="entry name" value="Opioid_rcpt"/>
</dbReference>
<dbReference type="PANTHER" id="PTHR24229:SF1">
    <property type="entry name" value="KAPPA-TYPE OPIOID RECEPTOR"/>
    <property type="match status" value="1"/>
</dbReference>
<dbReference type="PANTHER" id="PTHR24229">
    <property type="entry name" value="NEUROPEPTIDES RECEPTOR"/>
    <property type="match status" value="1"/>
</dbReference>
<dbReference type="Pfam" id="PF00001">
    <property type="entry name" value="7tm_1"/>
    <property type="match status" value="1"/>
</dbReference>
<dbReference type="PRINTS" id="PR00237">
    <property type="entry name" value="GPCRRHODOPSN"/>
</dbReference>
<dbReference type="PRINTS" id="PR00532">
    <property type="entry name" value="KAPPAOPIOIDR"/>
</dbReference>
<dbReference type="PRINTS" id="PR00384">
    <property type="entry name" value="OPIOIDR"/>
</dbReference>
<dbReference type="SMART" id="SM01381">
    <property type="entry name" value="7TM_GPCR_Srsx"/>
    <property type="match status" value="1"/>
</dbReference>
<dbReference type="SUPFAM" id="SSF81321">
    <property type="entry name" value="Family A G protein-coupled receptor-like"/>
    <property type="match status" value="1"/>
</dbReference>
<dbReference type="PROSITE" id="PS00237">
    <property type="entry name" value="G_PROTEIN_RECEP_F1_1"/>
    <property type="match status" value="1"/>
</dbReference>
<dbReference type="PROSITE" id="PS50262">
    <property type="entry name" value="G_PROTEIN_RECEP_F1_2"/>
    <property type="match status" value="1"/>
</dbReference>
<accession>P41144</accession>
<keyword id="KW-0085">Behavior</keyword>
<keyword id="KW-1003">Cell membrane</keyword>
<keyword id="KW-1015">Disulfide bond</keyword>
<keyword id="KW-0297">G-protein coupled receptor</keyword>
<keyword id="KW-0325">Glycoprotein</keyword>
<keyword id="KW-0449">Lipoprotein</keyword>
<keyword id="KW-0472">Membrane</keyword>
<keyword id="KW-0564">Palmitate</keyword>
<keyword id="KW-0675">Receptor</keyword>
<keyword id="KW-1185">Reference proteome</keyword>
<keyword id="KW-0807">Transducer</keyword>
<keyword id="KW-0812">Transmembrane</keyword>
<keyword id="KW-1133">Transmembrane helix</keyword>
<reference key="1">
    <citation type="journal article" date="1994" name="Proc. Natl. Acad. Sci. U.S.A.">
        <title>Primary structure and functional expression of a guinea pig kappa opioid (dynorphin) receptor.</title>
        <authorList>
            <person name="Xie G.X."/>
            <person name="Meng F."/>
            <person name="Mansour A."/>
            <person name="Thompson R.C."/>
            <person name="Hoversten M.T."/>
            <person name="Goldstein A."/>
            <person name="Watson S.J."/>
            <person name="Akil H."/>
        </authorList>
    </citation>
    <scope>NUCLEOTIDE SEQUENCE [MRNA]</scope>
    <scope>FUNCTION</scope>
    <scope>SUBCELLULAR LOCATION</scope>
    <source>
        <strain>Hartley</strain>
        <tissue>Brain</tissue>
    </source>
</reference>
<proteinExistence type="evidence at transcript level"/>
<protein>
    <recommendedName>
        <fullName>Kappa-type opioid receptor</fullName>
        <shortName>K-OR-1</shortName>
        <shortName>KOR-1</shortName>
    </recommendedName>
</protein>
<organism>
    <name type="scientific">Cavia porcellus</name>
    <name type="common">Guinea pig</name>
    <dbReference type="NCBI Taxonomy" id="10141"/>
    <lineage>
        <taxon>Eukaryota</taxon>
        <taxon>Metazoa</taxon>
        <taxon>Chordata</taxon>
        <taxon>Craniata</taxon>
        <taxon>Vertebrata</taxon>
        <taxon>Euteleostomi</taxon>
        <taxon>Mammalia</taxon>
        <taxon>Eutheria</taxon>
        <taxon>Euarchontoglires</taxon>
        <taxon>Glires</taxon>
        <taxon>Rodentia</taxon>
        <taxon>Hystricomorpha</taxon>
        <taxon>Caviidae</taxon>
        <taxon>Cavia</taxon>
    </lineage>
</organism>
<comment type="function">
    <text evidence="4">G-protein coupled opioid receptor that functions as a receptor for endogenous alpha-neoendorphins and dynorphins, but has low affinity for beta-endorphins. Also functions as a receptor for various synthetic opioids and for the psychoactive diterpene salvinorin A. Ligand binding causes a conformation change that triggers signaling via guanine nucleotide-binding proteins (G proteins) and modulates the activity of down-stream effectors, such as adenylate cyclase. Signaling leads to the inhibition of adenylate cyclase activity. Inhibits neurotransmitter release by reducing calcium ion currents and increasing potassium ion conductance. Plays a role in the perception of pain. Plays a role in mediating reduced physical activity upon treatment with synthetic opioids. Plays a role in the regulation of salivation in response to synthetic opioids. May play a role in arousal and regulation of autonomic and neuroendocrine functions.</text>
</comment>
<comment type="subunit">
    <text evidence="1">Interacts with NHERF1. Interacts with GABARAPL1 (By similarity).</text>
</comment>
<comment type="subcellular location">
    <subcellularLocation>
        <location evidence="4">Cell membrane</location>
        <topology evidence="4">Multi-pass membrane protein</topology>
    </subcellularLocation>
</comment>
<comment type="similarity">
    <text evidence="3">Belongs to the G-protein coupled receptor 1 family.</text>
</comment>
<evidence type="ECO:0000250" key="1"/>
<evidence type="ECO:0000255" key="2"/>
<evidence type="ECO:0000255" key="3">
    <source>
        <dbReference type="PROSITE-ProRule" id="PRU00521"/>
    </source>
</evidence>
<evidence type="ECO:0000269" key="4">
    <source>
    </source>
</evidence>
<name>OPRK_CAVPO</name>
<gene>
    <name type="primary">OPRK1</name>
</gene>
<feature type="chain" id="PRO_0000069966" description="Kappa-type opioid receptor">
    <location>
        <begin position="1"/>
        <end position="380"/>
    </location>
</feature>
<feature type="topological domain" description="Extracellular" evidence="1">
    <location>
        <begin position="1"/>
        <end position="57"/>
    </location>
</feature>
<feature type="transmembrane region" description="Helical; Name=1" evidence="1">
    <location>
        <begin position="58"/>
        <end position="85"/>
    </location>
</feature>
<feature type="topological domain" description="Cytoplasmic" evidence="1">
    <location>
        <begin position="86"/>
        <end position="95"/>
    </location>
</feature>
<feature type="transmembrane region" description="Helical; Name=2" evidence="1">
    <location>
        <begin position="96"/>
        <end position="119"/>
    </location>
</feature>
<feature type="topological domain" description="Extracellular" evidence="1">
    <location>
        <begin position="120"/>
        <end position="132"/>
    </location>
</feature>
<feature type="transmembrane region" description="Helical; Name=3" evidence="1">
    <location>
        <begin position="133"/>
        <end position="154"/>
    </location>
</feature>
<feature type="topological domain" description="Cytoplasmic" evidence="1">
    <location>
        <begin position="155"/>
        <end position="173"/>
    </location>
</feature>
<feature type="transmembrane region" description="Helical; Name=4" evidence="1">
    <location>
        <begin position="174"/>
        <end position="196"/>
    </location>
</feature>
<feature type="topological domain" description="Extracellular" evidence="1">
    <location>
        <begin position="197"/>
        <end position="222"/>
    </location>
</feature>
<feature type="transmembrane region" description="Helical; Name=5" evidence="1">
    <location>
        <begin position="223"/>
        <end position="247"/>
    </location>
</feature>
<feature type="topological domain" description="Cytoplasmic" evidence="1">
    <location>
        <begin position="248"/>
        <end position="274"/>
    </location>
</feature>
<feature type="transmembrane region" description="Helical; Name=6" evidence="1">
    <location>
        <begin position="275"/>
        <end position="296"/>
    </location>
</feature>
<feature type="topological domain" description="Extracellular" evidence="1">
    <location>
        <begin position="297"/>
        <end position="311"/>
    </location>
</feature>
<feature type="transmembrane region" description="Helical; Name=7" evidence="1">
    <location>
        <begin position="312"/>
        <end position="333"/>
    </location>
</feature>
<feature type="topological domain" description="Cytoplasmic" evidence="1">
    <location>
        <begin position="334"/>
        <end position="380"/>
    </location>
</feature>
<feature type="lipid moiety-binding region" description="S-palmitoyl cysteine" evidence="2">
    <location>
        <position position="345"/>
    </location>
</feature>
<feature type="glycosylation site" description="N-linked (GlcNAc...) asparagine" evidence="1">
    <location>
        <position position="25"/>
    </location>
</feature>
<feature type="glycosylation site" description="N-linked (GlcNAc...) asparagine" evidence="1">
    <location>
        <position position="39"/>
    </location>
</feature>
<feature type="disulfide bond" evidence="3">
    <location>
        <begin position="131"/>
        <end position="210"/>
    </location>
</feature>